<dbReference type="EMBL" id="CP000100">
    <property type="protein sequence ID" value="ABB57517.1"/>
    <property type="molecule type" value="Genomic_DNA"/>
</dbReference>
<dbReference type="RefSeq" id="WP_011244783.1">
    <property type="nucleotide sequence ID" value="NZ_JACJTX010000004.1"/>
</dbReference>
<dbReference type="SMR" id="Q31N52"/>
<dbReference type="STRING" id="1140.Synpcc7942_1487"/>
<dbReference type="PaxDb" id="1140-Synpcc7942_1487"/>
<dbReference type="GeneID" id="72430480"/>
<dbReference type="KEGG" id="syf:Synpcc7942_1487"/>
<dbReference type="eggNOG" id="COG0522">
    <property type="taxonomic scope" value="Bacteria"/>
</dbReference>
<dbReference type="HOGENOM" id="CLU_092403_0_5_3"/>
<dbReference type="OrthoDB" id="9803672at2"/>
<dbReference type="BioCyc" id="SYNEL:SYNPCC7942_1487-MONOMER"/>
<dbReference type="Proteomes" id="UP000889800">
    <property type="component" value="Chromosome"/>
</dbReference>
<dbReference type="GO" id="GO:0015935">
    <property type="term" value="C:small ribosomal subunit"/>
    <property type="evidence" value="ECO:0007669"/>
    <property type="project" value="InterPro"/>
</dbReference>
<dbReference type="GO" id="GO:0019843">
    <property type="term" value="F:rRNA binding"/>
    <property type="evidence" value="ECO:0007669"/>
    <property type="project" value="UniProtKB-UniRule"/>
</dbReference>
<dbReference type="GO" id="GO:0003735">
    <property type="term" value="F:structural constituent of ribosome"/>
    <property type="evidence" value="ECO:0007669"/>
    <property type="project" value="InterPro"/>
</dbReference>
<dbReference type="GO" id="GO:0042274">
    <property type="term" value="P:ribosomal small subunit biogenesis"/>
    <property type="evidence" value="ECO:0007669"/>
    <property type="project" value="TreeGrafter"/>
</dbReference>
<dbReference type="GO" id="GO:0006412">
    <property type="term" value="P:translation"/>
    <property type="evidence" value="ECO:0007669"/>
    <property type="project" value="UniProtKB-UniRule"/>
</dbReference>
<dbReference type="CDD" id="cd00165">
    <property type="entry name" value="S4"/>
    <property type="match status" value="1"/>
</dbReference>
<dbReference type="FunFam" id="3.10.290.10:FF:000001">
    <property type="entry name" value="30S ribosomal protein S4"/>
    <property type="match status" value="1"/>
</dbReference>
<dbReference type="FunFam" id="1.10.1050.10:FF:000002">
    <property type="entry name" value="30S ribosomal protein S4, chloroplastic"/>
    <property type="match status" value="1"/>
</dbReference>
<dbReference type="Gene3D" id="1.10.1050.10">
    <property type="entry name" value="Ribosomal Protein S4 Delta 41, Chain A, domain 1"/>
    <property type="match status" value="1"/>
</dbReference>
<dbReference type="Gene3D" id="3.10.290.10">
    <property type="entry name" value="RNA-binding S4 domain"/>
    <property type="match status" value="1"/>
</dbReference>
<dbReference type="HAMAP" id="MF_01306_B">
    <property type="entry name" value="Ribosomal_uS4_B"/>
    <property type="match status" value="1"/>
</dbReference>
<dbReference type="InterPro" id="IPR022801">
    <property type="entry name" value="Ribosomal_uS4"/>
</dbReference>
<dbReference type="InterPro" id="IPR005709">
    <property type="entry name" value="Ribosomal_uS4_bac-type"/>
</dbReference>
<dbReference type="InterPro" id="IPR018079">
    <property type="entry name" value="Ribosomal_uS4_CS"/>
</dbReference>
<dbReference type="InterPro" id="IPR001912">
    <property type="entry name" value="Ribosomal_uS4_N"/>
</dbReference>
<dbReference type="InterPro" id="IPR002942">
    <property type="entry name" value="S4_RNA-bd"/>
</dbReference>
<dbReference type="InterPro" id="IPR036986">
    <property type="entry name" value="S4_RNA-bd_sf"/>
</dbReference>
<dbReference type="NCBIfam" id="NF003717">
    <property type="entry name" value="PRK05327.1"/>
    <property type="match status" value="1"/>
</dbReference>
<dbReference type="NCBIfam" id="TIGR01017">
    <property type="entry name" value="rpsD_bact"/>
    <property type="match status" value="1"/>
</dbReference>
<dbReference type="PANTHER" id="PTHR11831">
    <property type="entry name" value="30S 40S RIBOSOMAL PROTEIN"/>
    <property type="match status" value="1"/>
</dbReference>
<dbReference type="PANTHER" id="PTHR11831:SF4">
    <property type="entry name" value="SMALL RIBOSOMAL SUBUNIT PROTEIN US4M"/>
    <property type="match status" value="1"/>
</dbReference>
<dbReference type="Pfam" id="PF00163">
    <property type="entry name" value="Ribosomal_S4"/>
    <property type="match status" value="1"/>
</dbReference>
<dbReference type="Pfam" id="PF01479">
    <property type="entry name" value="S4"/>
    <property type="match status" value="1"/>
</dbReference>
<dbReference type="SMART" id="SM01390">
    <property type="entry name" value="Ribosomal_S4"/>
    <property type="match status" value="1"/>
</dbReference>
<dbReference type="SMART" id="SM00363">
    <property type="entry name" value="S4"/>
    <property type="match status" value="1"/>
</dbReference>
<dbReference type="SUPFAM" id="SSF55174">
    <property type="entry name" value="Alpha-L RNA-binding motif"/>
    <property type="match status" value="1"/>
</dbReference>
<dbReference type="PROSITE" id="PS00632">
    <property type="entry name" value="RIBOSOMAL_S4"/>
    <property type="match status" value="1"/>
</dbReference>
<dbReference type="PROSITE" id="PS50889">
    <property type="entry name" value="S4"/>
    <property type="match status" value="1"/>
</dbReference>
<name>RS4_SYNE7</name>
<comment type="function">
    <text evidence="1">One of the primary rRNA binding proteins, it binds directly to 16S rRNA where it nucleates assembly of the body of the 30S subunit.</text>
</comment>
<comment type="function">
    <text evidence="1">With S5 and S12 plays an important role in translational accuracy.</text>
</comment>
<comment type="subunit">
    <text evidence="1">Part of the 30S ribosomal subunit. Contacts protein S5. The interaction surface between S4 and S5 is involved in control of translational fidelity.</text>
</comment>
<comment type="similarity">
    <text evidence="1">Belongs to the universal ribosomal protein uS4 family.</text>
</comment>
<feature type="chain" id="PRO_0000293389" description="Small ribosomal subunit protein uS4">
    <location>
        <begin position="1"/>
        <end position="202"/>
    </location>
</feature>
<feature type="domain" description="S4 RNA-binding" evidence="1">
    <location>
        <begin position="90"/>
        <end position="154"/>
    </location>
</feature>
<feature type="region of interest" description="Disordered" evidence="2">
    <location>
        <begin position="23"/>
        <end position="42"/>
    </location>
</feature>
<proteinExistence type="inferred from homology"/>
<protein>
    <recommendedName>
        <fullName evidence="1">Small ribosomal subunit protein uS4</fullName>
    </recommendedName>
    <alternativeName>
        <fullName evidence="3">30S ribosomal protein S4</fullName>
    </alternativeName>
</protein>
<reference key="1">
    <citation type="submission" date="2005-08" db="EMBL/GenBank/DDBJ databases">
        <title>Complete sequence of chromosome 1 of Synechococcus elongatus PCC 7942.</title>
        <authorList>
            <consortium name="US DOE Joint Genome Institute"/>
            <person name="Copeland A."/>
            <person name="Lucas S."/>
            <person name="Lapidus A."/>
            <person name="Barry K."/>
            <person name="Detter J.C."/>
            <person name="Glavina T."/>
            <person name="Hammon N."/>
            <person name="Israni S."/>
            <person name="Pitluck S."/>
            <person name="Schmutz J."/>
            <person name="Larimer F."/>
            <person name="Land M."/>
            <person name="Kyrpides N."/>
            <person name="Lykidis A."/>
            <person name="Golden S."/>
            <person name="Richardson P."/>
        </authorList>
    </citation>
    <scope>NUCLEOTIDE SEQUENCE [LARGE SCALE GENOMIC DNA]</scope>
    <source>
        <strain>ATCC 33912 / PCC 7942 / FACHB-805</strain>
    </source>
</reference>
<keyword id="KW-1185">Reference proteome</keyword>
<keyword id="KW-0687">Ribonucleoprotein</keyword>
<keyword id="KW-0689">Ribosomal protein</keyword>
<keyword id="KW-0694">RNA-binding</keyword>
<keyword id="KW-0699">rRNA-binding</keyword>
<accession>Q31N52</accession>
<evidence type="ECO:0000255" key="1">
    <source>
        <dbReference type="HAMAP-Rule" id="MF_01306"/>
    </source>
</evidence>
<evidence type="ECO:0000256" key="2">
    <source>
        <dbReference type="SAM" id="MobiDB-lite"/>
    </source>
</evidence>
<evidence type="ECO:0000305" key="3"/>
<gene>
    <name evidence="1" type="primary">rpsD</name>
    <name evidence="1" type="synonym">rps4</name>
    <name type="ordered locus">Synpcc7942_1487</name>
</gene>
<sequence length="202" mass="23206">MSRYRGPRLRIVRRLGDLPGLTRKAARRSYPPGQHGQARRKRSEYAIRLEEKQKLRFNYGLSERQLVRYVKKARRMQGSTGTNLLQLLEMRLDNLVFRLGFAPTIPGARQLVNHGHVTVNGRVVDIASYNCRPGEVIGVRQREASRKLVTANLEYPGLANVPVHLDFDKNKLEAKVTGACEREWVALQINELLVVEYYSRKV</sequence>
<organism>
    <name type="scientific">Synechococcus elongatus (strain ATCC 33912 / PCC 7942 / FACHB-805)</name>
    <name type="common">Anacystis nidulans R2</name>
    <dbReference type="NCBI Taxonomy" id="1140"/>
    <lineage>
        <taxon>Bacteria</taxon>
        <taxon>Bacillati</taxon>
        <taxon>Cyanobacteriota</taxon>
        <taxon>Cyanophyceae</taxon>
        <taxon>Synechococcales</taxon>
        <taxon>Synechococcaceae</taxon>
        <taxon>Synechococcus</taxon>
    </lineage>
</organism>